<sequence length="247" mass="27305">MMERAEDLRLSLSLSSPLIAPRTHHVAMLFHAPPEKRFLEMPLLPAAKRSEVVAAEEERAGLRGGGGSDEEDGGCGIDGSRKKLRLSKDQSAVLEDSFREHPTLNPRQKATLAQQLGLRPRQVEVWFQNRRARTKLKQTEVDCEFLKRCCETLTEENRRLQKEVQELRALKLVSPHLYMNMSPPTTLTMCPSCERVSNTNNNSSAAAAADRRGIRTTTAAAGGSVVDTAADGGILCHRPIAVRPQQS</sequence>
<organism>
    <name type="scientific">Oryza sativa subsp. indica</name>
    <name type="common">Rice</name>
    <dbReference type="NCBI Taxonomy" id="39946"/>
    <lineage>
        <taxon>Eukaryota</taxon>
        <taxon>Viridiplantae</taxon>
        <taxon>Streptophyta</taxon>
        <taxon>Embryophyta</taxon>
        <taxon>Tracheophyta</taxon>
        <taxon>Spermatophyta</taxon>
        <taxon>Magnoliopsida</taxon>
        <taxon>Liliopsida</taxon>
        <taxon>Poales</taxon>
        <taxon>Poaceae</taxon>
        <taxon>BOP clade</taxon>
        <taxon>Oryzoideae</taxon>
        <taxon>Oryzeae</taxon>
        <taxon>Oryzinae</taxon>
        <taxon>Oryza</taxon>
        <taxon>Oryza sativa</taxon>
    </lineage>
</organism>
<reference key="1">
    <citation type="journal article" date="2002" name="Nature">
        <title>Sequence and analysis of rice chromosome 4.</title>
        <authorList>
            <person name="Feng Q."/>
            <person name="Zhang Y."/>
            <person name="Hao P."/>
            <person name="Wang S."/>
            <person name="Fu G."/>
            <person name="Huang Y."/>
            <person name="Li Y."/>
            <person name="Zhu J."/>
            <person name="Liu Y."/>
            <person name="Hu X."/>
            <person name="Jia P."/>
            <person name="Zhang Y."/>
            <person name="Zhao Q."/>
            <person name="Ying K."/>
            <person name="Yu S."/>
            <person name="Tang Y."/>
            <person name="Weng Q."/>
            <person name="Zhang L."/>
            <person name="Lu Y."/>
            <person name="Mu J."/>
            <person name="Lu Y."/>
            <person name="Zhang L.S."/>
            <person name="Yu Z."/>
            <person name="Fan D."/>
            <person name="Liu X."/>
            <person name="Lu T."/>
            <person name="Li C."/>
            <person name="Wu Y."/>
            <person name="Sun T."/>
            <person name="Lei H."/>
            <person name="Li T."/>
            <person name="Hu H."/>
            <person name="Guan J."/>
            <person name="Wu M."/>
            <person name="Zhang R."/>
            <person name="Zhou B."/>
            <person name="Chen Z."/>
            <person name="Chen L."/>
            <person name="Jin Z."/>
            <person name="Wang R."/>
            <person name="Yin H."/>
            <person name="Cai Z."/>
            <person name="Ren S."/>
            <person name="Lv G."/>
            <person name="Gu W."/>
            <person name="Zhu G."/>
            <person name="Tu Y."/>
            <person name="Jia J."/>
            <person name="Zhang Y."/>
            <person name="Chen J."/>
            <person name="Kang H."/>
            <person name="Chen X."/>
            <person name="Shao C."/>
            <person name="Sun Y."/>
            <person name="Hu Q."/>
            <person name="Zhang X."/>
            <person name="Zhang W."/>
            <person name="Wang L."/>
            <person name="Ding C."/>
            <person name="Sheng H."/>
            <person name="Gu J."/>
            <person name="Chen S."/>
            <person name="Ni L."/>
            <person name="Zhu F."/>
            <person name="Chen W."/>
            <person name="Lan L."/>
            <person name="Lai Y."/>
            <person name="Cheng Z."/>
            <person name="Gu M."/>
            <person name="Jiang J."/>
            <person name="Li J."/>
            <person name="Hong G."/>
            <person name="Xue Y."/>
            <person name="Han B."/>
        </authorList>
    </citation>
    <scope>NUCLEOTIDE SEQUENCE [LARGE SCALE GENOMIC DNA]</scope>
    <source>
        <strain>cv. Guang-Lu-Ai No.4</strain>
    </source>
</reference>
<reference key="2">
    <citation type="journal article" date="2005" name="PLoS Biol.">
        <title>The genomes of Oryza sativa: a history of duplications.</title>
        <authorList>
            <person name="Yu J."/>
            <person name="Wang J."/>
            <person name="Lin W."/>
            <person name="Li S."/>
            <person name="Li H."/>
            <person name="Zhou J."/>
            <person name="Ni P."/>
            <person name="Dong W."/>
            <person name="Hu S."/>
            <person name="Zeng C."/>
            <person name="Zhang J."/>
            <person name="Zhang Y."/>
            <person name="Li R."/>
            <person name="Xu Z."/>
            <person name="Li S."/>
            <person name="Li X."/>
            <person name="Zheng H."/>
            <person name="Cong L."/>
            <person name="Lin L."/>
            <person name="Yin J."/>
            <person name="Geng J."/>
            <person name="Li G."/>
            <person name="Shi J."/>
            <person name="Liu J."/>
            <person name="Lv H."/>
            <person name="Li J."/>
            <person name="Wang J."/>
            <person name="Deng Y."/>
            <person name="Ran L."/>
            <person name="Shi X."/>
            <person name="Wang X."/>
            <person name="Wu Q."/>
            <person name="Li C."/>
            <person name="Ren X."/>
            <person name="Wang J."/>
            <person name="Wang X."/>
            <person name="Li D."/>
            <person name="Liu D."/>
            <person name="Zhang X."/>
            <person name="Ji Z."/>
            <person name="Zhao W."/>
            <person name="Sun Y."/>
            <person name="Zhang Z."/>
            <person name="Bao J."/>
            <person name="Han Y."/>
            <person name="Dong L."/>
            <person name="Ji J."/>
            <person name="Chen P."/>
            <person name="Wu S."/>
            <person name="Liu J."/>
            <person name="Xiao Y."/>
            <person name="Bu D."/>
            <person name="Tan J."/>
            <person name="Yang L."/>
            <person name="Ye C."/>
            <person name="Zhang J."/>
            <person name="Xu J."/>
            <person name="Zhou Y."/>
            <person name="Yu Y."/>
            <person name="Zhang B."/>
            <person name="Zhuang S."/>
            <person name="Wei H."/>
            <person name="Liu B."/>
            <person name="Lei M."/>
            <person name="Yu H."/>
            <person name="Li Y."/>
            <person name="Xu H."/>
            <person name="Wei S."/>
            <person name="He X."/>
            <person name="Fang L."/>
            <person name="Zhang Z."/>
            <person name="Zhang Y."/>
            <person name="Huang X."/>
            <person name="Su Z."/>
            <person name="Tong W."/>
            <person name="Li J."/>
            <person name="Tong Z."/>
            <person name="Li S."/>
            <person name="Ye J."/>
            <person name="Wang L."/>
            <person name="Fang L."/>
            <person name="Lei T."/>
            <person name="Chen C.-S."/>
            <person name="Chen H.-C."/>
            <person name="Xu Z."/>
            <person name="Li H."/>
            <person name="Huang H."/>
            <person name="Zhang F."/>
            <person name="Xu H."/>
            <person name="Li N."/>
            <person name="Zhao C."/>
            <person name="Li S."/>
            <person name="Dong L."/>
            <person name="Huang Y."/>
            <person name="Li L."/>
            <person name="Xi Y."/>
            <person name="Qi Q."/>
            <person name="Li W."/>
            <person name="Zhang B."/>
            <person name="Hu W."/>
            <person name="Zhang Y."/>
            <person name="Tian X."/>
            <person name="Jiao Y."/>
            <person name="Liang X."/>
            <person name="Jin J."/>
            <person name="Gao L."/>
            <person name="Zheng W."/>
            <person name="Hao B."/>
            <person name="Liu S.-M."/>
            <person name="Wang W."/>
            <person name="Yuan L."/>
            <person name="Cao M."/>
            <person name="McDermott J."/>
            <person name="Samudrala R."/>
            <person name="Wang J."/>
            <person name="Wong G.K.-S."/>
            <person name="Yang H."/>
        </authorList>
    </citation>
    <scope>NUCLEOTIDE SEQUENCE [LARGE SCALE GENOMIC DNA]</scope>
    <source>
        <strain>cv. 93-11</strain>
    </source>
</reference>
<reference key="3">
    <citation type="journal article" date="2008" name="Plant Mol. Biol.">
        <title>A genome-wide survey of HD-Zip genes in rice and analysis of drought-responsive family members.</title>
        <authorList>
            <person name="Agalou A."/>
            <person name="Purwantomo S."/>
            <person name="Oevernaes E."/>
            <person name="Johannesson H."/>
            <person name="Zhu X."/>
            <person name="Estiati A."/>
            <person name="de Kam R.J."/>
            <person name="Engstroem P."/>
            <person name="Slamet-Loedin I.H."/>
            <person name="Zhu Z."/>
            <person name="Wang M."/>
            <person name="Xiong L."/>
            <person name="Meijer A.H."/>
            <person name="Ouwerkerk P.B.F."/>
        </authorList>
    </citation>
    <scope>NUCLEOTIDE SEQUENCE [MRNA] OF 41-190</scope>
    <scope>TISSUE SPECIFICITY</scope>
    <scope>GENE FAMILY</scope>
    <scope>NOMENCLATURE</scope>
    <source>
        <strain>cv. Minghui 86</strain>
    </source>
</reference>
<dbReference type="EMBL" id="CR855218">
    <property type="protein sequence ID" value="CAH67617.1"/>
    <property type="molecule type" value="Genomic_DNA"/>
</dbReference>
<dbReference type="EMBL" id="CM000129">
    <property type="protein sequence ID" value="EAY95070.1"/>
    <property type="molecule type" value="Genomic_DNA"/>
</dbReference>
<dbReference type="EMBL" id="EF555538">
    <property type="protein sequence ID" value="ABQ57279.1"/>
    <property type="molecule type" value="mRNA"/>
</dbReference>
<dbReference type="SMR" id="Q01I23"/>
<dbReference type="STRING" id="39946.Q01I23"/>
<dbReference type="EnsemblPlants" id="BGIOSGA014600-TA">
    <property type="protein sequence ID" value="BGIOSGA014600-PA"/>
    <property type="gene ID" value="BGIOSGA014600"/>
</dbReference>
<dbReference type="Gramene" id="BGIOSGA014600-TA">
    <property type="protein sequence ID" value="BGIOSGA014600-PA"/>
    <property type="gene ID" value="BGIOSGA014600"/>
</dbReference>
<dbReference type="HOGENOM" id="CLU_049516_4_0_1"/>
<dbReference type="OMA" id="PERRFME"/>
<dbReference type="Proteomes" id="UP000007015">
    <property type="component" value="Chromosome 4"/>
</dbReference>
<dbReference type="GO" id="GO:0005634">
    <property type="term" value="C:nucleus"/>
    <property type="evidence" value="ECO:0007669"/>
    <property type="project" value="UniProtKB-SubCell"/>
</dbReference>
<dbReference type="GO" id="GO:0000981">
    <property type="term" value="F:DNA-binding transcription factor activity, RNA polymerase II-specific"/>
    <property type="evidence" value="ECO:0007669"/>
    <property type="project" value="InterPro"/>
</dbReference>
<dbReference type="GO" id="GO:0043565">
    <property type="term" value="F:sequence-specific DNA binding"/>
    <property type="evidence" value="ECO:0007669"/>
    <property type="project" value="InterPro"/>
</dbReference>
<dbReference type="CDD" id="cd00086">
    <property type="entry name" value="homeodomain"/>
    <property type="match status" value="1"/>
</dbReference>
<dbReference type="FunFam" id="1.10.10.60:FF:000577">
    <property type="entry name" value="Homeobox-leucine zipper protein 18"/>
    <property type="match status" value="1"/>
</dbReference>
<dbReference type="Gene3D" id="1.10.10.60">
    <property type="entry name" value="Homeodomain-like"/>
    <property type="match status" value="1"/>
</dbReference>
<dbReference type="InterPro" id="IPR001356">
    <property type="entry name" value="HD"/>
</dbReference>
<dbReference type="InterPro" id="IPR050762">
    <property type="entry name" value="HD-ZIP_Homeobox_LZ_Class_II"/>
</dbReference>
<dbReference type="InterPro" id="IPR017970">
    <property type="entry name" value="Homeobox_CS"/>
</dbReference>
<dbReference type="InterPro" id="IPR009057">
    <property type="entry name" value="Homeodomain-like_sf"/>
</dbReference>
<dbReference type="InterPro" id="IPR000047">
    <property type="entry name" value="HTH_motif"/>
</dbReference>
<dbReference type="InterPro" id="IPR003106">
    <property type="entry name" value="Leu_zip_homeo"/>
</dbReference>
<dbReference type="PANTHER" id="PTHR45714">
    <property type="entry name" value="HOMEOBOX-LEUCINE ZIPPER PROTEIN HAT14"/>
    <property type="match status" value="1"/>
</dbReference>
<dbReference type="PANTHER" id="PTHR45714:SF16">
    <property type="entry name" value="HOMEOBOX-LEUCINE ZIPPER PROTEIN HAT2"/>
    <property type="match status" value="1"/>
</dbReference>
<dbReference type="Pfam" id="PF02183">
    <property type="entry name" value="HALZ"/>
    <property type="match status" value="1"/>
</dbReference>
<dbReference type="Pfam" id="PF00046">
    <property type="entry name" value="Homeodomain"/>
    <property type="match status" value="1"/>
</dbReference>
<dbReference type="PRINTS" id="PR00031">
    <property type="entry name" value="HTHREPRESSR"/>
</dbReference>
<dbReference type="SMART" id="SM00340">
    <property type="entry name" value="HALZ"/>
    <property type="match status" value="1"/>
</dbReference>
<dbReference type="SMART" id="SM00389">
    <property type="entry name" value="HOX"/>
    <property type="match status" value="1"/>
</dbReference>
<dbReference type="SUPFAM" id="SSF46689">
    <property type="entry name" value="Homeodomain-like"/>
    <property type="match status" value="1"/>
</dbReference>
<dbReference type="PROSITE" id="PS00027">
    <property type="entry name" value="HOMEOBOX_1"/>
    <property type="match status" value="1"/>
</dbReference>
<dbReference type="PROSITE" id="PS50071">
    <property type="entry name" value="HOMEOBOX_2"/>
    <property type="match status" value="1"/>
</dbReference>
<feature type="chain" id="PRO_0000331706" description="Homeobox-leucine zipper protein HOX17">
    <location>
        <begin position="1"/>
        <end position="247"/>
    </location>
</feature>
<feature type="DNA-binding region" description="Homeobox" evidence="2">
    <location>
        <begin position="79"/>
        <end position="138"/>
    </location>
</feature>
<feature type="region of interest" description="Disordered" evidence="3">
    <location>
        <begin position="58"/>
        <end position="81"/>
    </location>
</feature>
<feature type="region of interest" description="Leucine-zipper">
    <location>
        <begin position="137"/>
        <end position="182"/>
    </location>
</feature>
<accession>Q01I23</accession>
<accession>A2XW60</accession>
<accession>A5JPV3</accession>
<name>HOX17_ORYSI</name>
<gene>
    <name type="primary">HOX17</name>
    <name type="ORF">OsI_016303</name>
    <name type="ORF">OSIGBa0106P14.7</name>
</gene>
<evidence type="ECO:0000250" key="1"/>
<evidence type="ECO:0000255" key="2">
    <source>
        <dbReference type="PROSITE-ProRule" id="PRU00108"/>
    </source>
</evidence>
<evidence type="ECO:0000256" key="3">
    <source>
        <dbReference type="SAM" id="MobiDB-lite"/>
    </source>
</evidence>
<evidence type="ECO:0000269" key="4">
    <source>
    </source>
</evidence>
<evidence type="ECO:0000305" key="5"/>
<keyword id="KW-0238">DNA-binding</keyword>
<keyword id="KW-0371">Homeobox</keyword>
<keyword id="KW-0539">Nucleus</keyword>
<keyword id="KW-1185">Reference proteome</keyword>
<keyword id="KW-0804">Transcription</keyword>
<keyword id="KW-0805">Transcription regulation</keyword>
<proteinExistence type="evidence at transcript level"/>
<comment type="function">
    <text evidence="1">Probable transcription factor.</text>
</comment>
<comment type="subcellular location">
    <subcellularLocation>
        <location evidence="5">Nucleus</location>
    </subcellularLocation>
</comment>
<comment type="tissue specificity">
    <text evidence="4">Expressed in seedlings, roots, stems, leaf sheaths and blades and panicles.</text>
</comment>
<comment type="similarity">
    <text evidence="5">Belongs to the HD-ZIP homeobox family. Class II subfamily.</text>
</comment>
<protein>
    <recommendedName>
        <fullName>Homeobox-leucine zipper protein HOX17</fullName>
    </recommendedName>
    <alternativeName>
        <fullName>HD-ZIP protein HOX17</fullName>
    </alternativeName>
    <alternativeName>
        <fullName>Homeodomain transcription factor HOX17</fullName>
    </alternativeName>
    <alternativeName>
        <fullName>OsHox17</fullName>
    </alternativeName>
</protein>